<feature type="signal peptide" evidence="1">
    <location>
        <begin position="1"/>
        <end position="21"/>
    </location>
</feature>
<feature type="propeptide" id="PRO_0000451016" evidence="4">
    <location>
        <begin position="22"/>
        <end position="40"/>
    </location>
</feature>
<feature type="chain" id="PRO_5003337453" description="Conotoxin Lt28.6" evidence="4">
    <location>
        <begin position="41"/>
        <end position="85"/>
    </location>
</feature>
<protein>
    <recommendedName>
        <fullName evidence="2">Conotoxin Lt28.6</fullName>
    </recommendedName>
    <alternativeName>
        <fullName evidence="5">Conotoxin Lt15.5a</fullName>
    </alternativeName>
</protein>
<keyword id="KW-1015">Disulfide bond</keyword>
<keyword id="KW-0528">Neurotoxin</keyword>
<keyword id="KW-0964">Secreted</keyword>
<keyword id="KW-0732">Signal</keyword>
<keyword id="KW-0800">Toxin</keyword>
<dbReference type="EMBL" id="HM003931">
    <property type="protein sequence ID" value="ADZ76489.1"/>
    <property type="molecule type" value="mRNA"/>
</dbReference>
<dbReference type="GO" id="GO:0005576">
    <property type="term" value="C:extracellular region"/>
    <property type="evidence" value="ECO:0007669"/>
    <property type="project" value="UniProtKB-SubCell"/>
</dbReference>
<dbReference type="GO" id="GO:0090729">
    <property type="term" value="F:toxin activity"/>
    <property type="evidence" value="ECO:0007669"/>
    <property type="project" value="UniProtKB-KW"/>
</dbReference>
<name>CDS6_CONLT</name>
<evidence type="ECO:0000255" key="1"/>
<evidence type="ECO:0000303" key="2">
    <source>
    </source>
</evidence>
<evidence type="ECO:0000305" key="3"/>
<evidence type="ECO:0000305" key="4">
    <source>
    </source>
</evidence>
<evidence type="ECO:0000312" key="5">
    <source>
        <dbReference type="EMBL" id="ADZ76489.1"/>
    </source>
</evidence>
<organism>
    <name type="scientific">Conus litteratus</name>
    <name type="common">Lettered cone</name>
    <dbReference type="NCBI Taxonomy" id="89445"/>
    <lineage>
        <taxon>Eukaryota</taxon>
        <taxon>Metazoa</taxon>
        <taxon>Spiralia</taxon>
        <taxon>Lophotrochozoa</taxon>
        <taxon>Mollusca</taxon>
        <taxon>Gastropoda</taxon>
        <taxon>Caenogastropoda</taxon>
        <taxon>Neogastropoda</taxon>
        <taxon>Conoidea</taxon>
        <taxon>Conidae</taxon>
        <taxon>Conus</taxon>
        <taxon>Elisaconus</taxon>
    </lineage>
</organism>
<sequence>MPKLEMMLLVLLILPLCYIDAVGPPPPWNMEDEIIEHWQKLHCHEISDLTPWILCSPEPLCGGKGCCAQEVCDCSGPVCTCPPCL</sequence>
<reference key="1">
    <citation type="journal article" date="2017" name="Peptides">
        <title>Cloning, expression and functional characterization of a D-superfamily conotoxin Lt28.1 with previously undescribed cysteine pattern.</title>
        <authorList>
            <person name="Lu J."/>
            <person name="Zhang K."/>
            <person name="Wang S."/>
            <person name="Sun T."/>
            <person name="Yu S."/>
            <person name="Dai Q."/>
            <person name="Liu Z."/>
        </authorList>
    </citation>
    <scope>NUCLEOTIDE SEQUENCE [MRNA]</scope>
    <source>
        <tissue>Venom duct</tissue>
    </source>
</reference>
<proteinExistence type="inferred from homology"/>
<accession>F6JWV2</accession>
<comment type="function">
    <text evidence="3">Probable neurotoxin.</text>
</comment>
<comment type="subcellular location">
    <subcellularLocation>
        <location evidence="4">Secreted</location>
    </subcellularLocation>
</comment>
<comment type="tissue specificity">
    <text evidence="4">Expressed by the venom duct.</text>
</comment>
<comment type="domain">
    <text evidence="3">The cysteine framework is XXVIII (C-C-C-CC-C-C-C-C-C).</text>
</comment>
<comment type="PTM">
    <text evidence="3">Contains 5 disulfide bonds.</text>
</comment>
<comment type="similarity">
    <text evidence="3">Belongs to the conotoxin D superfamily.</text>
</comment>